<keyword id="KW-0963">Cytoplasm</keyword>
<keyword id="KW-0255">Endonuclease</keyword>
<keyword id="KW-0378">Hydrolase</keyword>
<keyword id="KW-0464">Manganese</keyword>
<keyword id="KW-0479">Metal-binding</keyword>
<keyword id="KW-0540">Nuclease</keyword>
<keyword id="KW-1185">Reference proteome</keyword>
<organism>
    <name type="scientific">Prochlorococcus marinus (strain MIT 9313)</name>
    <dbReference type="NCBI Taxonomy" id="74547"/>
    <lineage>
        <taxon>Bacteria</taxon>
        <taxon>Bacillati</taxon>
        <taxon>Cyanobacteriota</taxon>
        <taxon>Cyanophyceae</taxon>
        <taxon>Synechococcales</taxon>
        <taxon>Prochlorococcaceae</taxon>
        <taxon>Prochlorococcus</taxon>
    </lineage>
</organism>
<gene>
    <name evidence="1" type="primary">rnhB</name>
    <name type="ordered locus">PMT_1788</name>
</gene>
<name>RNH2_PROMM</name>
<dbReference type="EC" id="3.1.26.4" evidence="1"/>
<dbReference type="EMBL" id="BX548175">
    <property type="protein sequence ID" value="CAE21963.1"/>
    <property type="molecule type" value="Genomic_DNA"/>
</dbReference>
<dbReference type="SMR" id="Q7V4Z5"/>
<dbReference type="KEGG" id="pmt:PMT_1788"/>
<dbReference type="eggNOG" id="COG0164">
    <property type="taxonomic scope" value="Bacteria"/>
</dbReference>
<dbReference type="HOGENOM" id="CLU_036532_3_1_3"/>
<dbReference type="Proteomes" id="UP000001423">
    <property type="component" value="Chromosome"/>
</dbReference>
<dbReference type="GO" id="GO:0005737">
    <property type="term" value="C:cytoplasm"/>
    <property type="evidence" value="ECO:0007669"/>
    <property type="project" value="UniProtKB-SubCell"/>
</dbReference>
<dbReference type="GO" id="GO:0032299">
    <property type="term" value="C:ribonuclease H2 complex"/>
    <property type="evidence" value="ECO:0007669"/>
    <property type="project" value="TreeGrafter"/>
</dbReference>
<dbReference type="GO" id="GO:0030145">
    <property type="term" value="F:manganese ion binding"/>
    <property type="evidence" value="ECO:0007669"/>
    <property type="project" value="UniProtKB-UniRule"/>
</dbReference>
<dbReference type="GO" id="GO:0003723">
    <property type="term" value="F:RNA binding"/>
    <property type="evidence" value="ECO:0007669"/>
    <property type="project" value="InterPro"/>
</dbReference>
<dbReference type="GO" id="GO:0004523">
    <property type="term" value="F:RNA-DNA hybrid ribonuclease activity"/>
    <property type="evidence" value="ECO:0007669"/>
    <property type="project" value="UniProtKB-UniRule"/>
</dbReference>
<dbReference type="GO" id="GO:0043137">
    <property type="term" value="P:DNA replication, removal of RNA primer"/>
    <property type="evidence" value="ECO:0007669"/>
    <property type="project" value="TreeGrafter"/>
</dbReference>
<dbReference type="GO" id="GO:0006298">
    <property type="term" value="P:mismatch repair"/>
    <property type="evidence" value="ECO:0007669"/>
    <property type="project" value="TreeGrafter"/>
</dbReference>
<dbReference type="CDD" id="cd07182">
    <property type="entry name" value="RNase_HII_bacteria_HII_like"/>
    <property type="match status" value="1"/>
</dbReference>
<dbReference type="Gene3D" id="3.30.420.10">
    <property type="entry name" value="Ribonuclease H-like superfamily/Ribonuclease H"/>
    <property type="match status" value="1"/>
</dbReference>
<dbReference type="HAMAP" id="MF_00052_B">
    <property type="entry name" value="RNase_HII_B"/>
    <property type="match status" value="1"/>
</dbReference>
<dbReference type="InterPro" id="IPR022898">
    <property type="entry name" value="RNase_HII"/>
</dbReference>
<dbReference type="InterPro" id="IPR001352">
    <property type="entry name" value="RNase_HII/HIII"/>
</dbReference>
<dbReference type="InterPro" id="IPR024567">
    <property type="entry name" value="RNase_HII/HIII_dom"/>
</dbReference>
<dbReference type="InterPro" id="IPR012337">
    <property type="entry name" value="RNaseH-like_sf"/>
</dbReference>
<dbReference type="InterPro" id="IPR036397">
    <property type="entry name" value="RNaseH_sf"/>
</dbReference>
<dbReference type="NCBIfam" id="NF000595">
    <property type="entry name" value="PRK00015.1-3"/>
    <property type="match status" value="1"/>
</dbReference>
<dbReference type="NCBIfam" id="NF010537">
    <property type="entry name" value="PRK13925.1"/>
    <property type="match status" value="1"/>
</dbReference>
<dbReference type="PANTHER" id="PTHR10954">
    <property type="entry name" value="RIBONUCLEASE H2 SUBUNIT A"/>
    <property type="match status" value="1"/>
</dbReference>
<dbReference type="PANTHER" id="PTHR10954:SF18">
    <property type="entry name" value="RIBONUCLEASE HII"/>
    <property type="match status" value="1"/>
</dbReference>
<dbReference type="Pfam" id="PF01351">
    <property type="entry name" value="RNase_HII"/>
    <property type="match status" value="1"/>
</dbReference>
<dbReference type="SUPFAM" id="SSF53098">
    <property type="entry name" value="Ribonuclease H-like"/>
    <property type="match status" value="1"/>
</dbReference>
<dbReference type="PROSITE" id="PS51975">
    <property type="entry name" value="RNASE_H_2"/>
    <property type="match status" value="1"/>
</dbReference>
<comment type="function">
    <text evidence="1">Endonuclease that specifically degrades the RNA of RNA-DNA hybrids.</text>
</comment>
<comment type="catalytic activity">
    <reaction evidence="1">
        <text>Endonucleolytic cleavage to 5'-phosphomonoester.</text>
        <dbReference type="EC" id="3.1.26.4"/>
    </reaction>
</comment>
<comment type="cofactor">
    <cofactor evidence="1">
        <name>Mn(2+)</name>
        <dbReference type="ChEBI" id="CHEBI:29035"/>
    </cofactor>
    <cofactor evidence="1">
        <name>Mg(2+)</name>
        <dbReference type="ChEBI" id="CHEBI:18420"/>
    </cofactor>
    <text evidence="1">Manganese or magnesium. Binds 1 divalent metal ion per monomer in the absence of substrate. May bind a second metal ion after substrate binding.</text>
</comment>
<comment type="subcellular location">
    <subcellularLocation>
        <location evidence="1">Cytoplasm</location>
    </subcellularLocation>
</comment>
<comment type="similarity">
    <text evidence="1">Belongs to the RNase HII family.</text>
</comment>
<proteinExistence type="inferred from homology"/>
<sequence length="218" mass="23327">MNPRIRAAAAVAPQLQADMDPSAESIAGVDEVGRGCWFGPVFAGAVVLTEVAAVELLAEGLTDSKALTVRRRARLVPLIEDAATAWALGQASAREIDALGIRSATELAMLRALQRLPTPLELVLVDGVLPLRLWMGPQRTVVRGDSKCAAIAAASVLAKQARDGLIKRLASRFYGYGLERHVGYGTAIHRRALLDLGPTELHRRSFLTKLFAVNGSLT</sequence>
<feature type="chain" id="PRO_0000111603" description="Ribonuclease HII">
    <location>
        <begin position="1"/>
        <end position="218"/>
    </location>
</feature>
<feature type="domain" description="RNase H type-2" evidence="2">
    <location>
        <begin position="24"/>
        <end position="218"/>
    </location>
</feature>
<feature type="binding site" evidence="1">
    <location>
        <position position="30"/>
    </location>
    <ligand>
        <name>a divalent metal cation</name>
        <dbReference type="ChEBI" id="CHEBI:60240"/>
    </ligand>
</feature>
<feature type="binding site" evidence="1">
    <location>
        <position position="31"/>
    </location>
    <ligand>
        <name>a divalent metal cation</name>
        <dbReference type="ChEBI" id="CHEBI:60240"/>
    </ligand>
</feature>
<feature type="binding site" evidence="1">
    <location>
        <position position="126"/>
    </location>
    <ligand>
        <name>a divalent metal cation</name>
        <dbReference type="ChEBI" id="CHEBI:60240"/>
    </ligand>
</feature>
<accession>Q7V4Z5</accession>
<evidence type="ECO:0000255" key="1">
    <source>
        <dbReference type="HAMAP-Rule" id="MF_00052"/>
    </source>
</evidence>
<evidence type="ECO:0000255" key="2">
    <source>
        <dbReference type="PROSITE-ProRule" id="PRU01319"/>
    </source>
</evidence>
<protein>
    <recommendedName>
        <fullName evidence="1">Ribonuclease HII</fullName>
        <shortName evidence="1">RNase HII</shortName>
        <ecNumber evidence="1">3.1.26.4</ecNumber>
    </recommendedName>
</protein>
<reference key="1">
    <citation type="journal article" date="2003" name="Nature">
        <title>Genome divergence in two Prochlorococcus ecotypes reflects oceanic niche differentiation.</title>
        <authorList>
            <person name="Rocap G."/>
            <person name="Larimer F.W."/>
            <person name="Lamerdin J.E."/>
            <person name="Malfatti S."/>
            <person name="Chain P."/>
            <person name="Ahlgren N.A."/>
            <person name="Arellano A."/>
            <person name="Coleman M."/>
            <person name="Hauser L."/>
            <person name="Hess W.R."/>
            <person name="Johnson Z.I."/>
            <person name="Land M.L."/>
            <person name="Lindell D."/>
            <person name="Post A.F."/>
            <person name="Regala W."/>
            <person name="Shah M."/>
            <person name="Shaw S.L."/>
            <person name="Steglich C."/>
            <person name="Sullivan M.B."/>
            <person name="Ting C.S."/>
            <person name="Tolonen A."/>
            <person name="Webb E.A."/>
            <person name="Zinser E.R."/>
            <person name="Chisholm S.W."/>
        </authorList>
    </citation>
    <scope>NUCLEOTIDE SEQUENCE [LARGE SCALE GENOMIC DNA]</scope>
    <source>
        <strain>MIT 9313</strain>
    </source>
</reference>